<accession>A2SA04</accession>
<evidence type="ECO:0000255" key="1">
    <source>
        <dbReference type="HAMAP-Rule" id="MF_00203"/>
    </source>
</evidence>
<evidence type="ECO:0000256" key="2">
    <source>
        <dbReference type="SAM" id="MobiDB-lite"/>
    </source>
</evidence>
<sequence length="747" mass="80836">MTSPDAPESRFEPKPILAQLPHLPGVYRYYDVQDAVLYVGKARDLKKRVSSYFTKTQLSPRIAMMITRIARIETTVTRSEAEALLLENNLIKALAPRYNILFRDDKSYPYLKLTGHRFPRMAYYRGAVDKKNQYFGPFPSAWAVRESIQILQRVFQLRTCEDSVFNNRTRPCLLHQIGRCSAPCVGAIGEEDYARDVDNASRFLLGRQGEVMGELERKMHAFAAELKFEQAAAVRNQMSSLAKVLHQQAIDVGGDSDVDILAVVAQGGRVCVNLAMVRGGRHLGDKAYFPAHVETALALAGDIEALAGEGAGDGVQAAAQPAQAPLATDADATDAAATEAKTVTAAAAARAGARTAQAAGARAAASAEGDVERRAEGETHARADAREAAALPDGAAAAQEADADVDAAPLETEVLEAFIAQHYLGNRVPPVLVVSHAPANRELIDLLVEQAGHKVAVVRQPQGQKRAWLTMAEQNARLALARLLSEQGSQQARTRSLADVLGYESDDLAQLRIECFDISHTMGEATQASCVVYHHHRMQSSEYRRYNIAGITPGDDYAAMRQVLTRRYEKMVEEAAAEASADEAAGIDGNAVHAAASAGRLPNVVLIDGGRGQVEIARQVFSELGLDISMLVGVAKGEGRKVGLETLIFADGRAPLELGKESAALMLVAQIRDEAHRFAITGMRAKRAKTRQTSRLEELEGVGAKRRQRLLARFGGLRGVVAASVDELASVEGISRALAEQIYRQLH</sequence>
<reference key="1">
    <citation type="journal article" date="2010" name="Genome Biol. Evol.">
        <title>Continuing evolution of Burkholderia mallei through genome reduction and large-scale rearrangements.</title>
        <authorList>
            <person name="Losada L."/>
            <person name="Ronning C.M."/>
            <person name="DeShazer D."/>
            <person name="Woods D."/>
            <person name="Fedorova N."/>
            <person name="Kim H.S."/>
            <person name="Shabalina S.A."/>
            <person name="Pearson T.R."/>
            <person name="Brinkac L."/>
            <person name="Tan P."/>
            <person name="Nandi T."/>
            <person name="Crabtree J."/>
            <person name="Badger J."/>
            <person name="Beckstrom-Sternberg S."/>
            <person name="Saqib M."/>
            <person name="Schutzer S.E."/>
            <person name="Keim P."/>
            <person name="Nierman W.C."/>
        </authorList>
    </citation>
    <scope>NUCLEOTIDE SEQUENCE [LARGE SCALE GENOMIC DNA]</scope>
    <source>
        <strain>NCTC 10229</strain>
    </source>
</reference>
<proteinExistence type="inferred from homology"/>
<protein>
    <recommendedName>
        <fullName evidence="1">UvrABC system protein C</fullName>
        <shortName evidence="1">Protein UvrC</shortName>
    </recommendedName>
    <alternativeName>
        <fullName evidence="1">Excinuclease ABC subunit C</fullName>
    </alternativeName>
</protein>
<feature type="chain" id="PRO_1000077760" description="UvrABC system protein C">
    <location>
        <begin position="1"/>
        <end position="747"/>
    </location>
</feature>
<feature type="domain" description="GIY-YIG" evidence="1">
    <location>
        <begin position="22"/>
        <end position="100"/>
    </location>
</feature>
<feature type="domain" description="UVR" evidence="1">
    <location>
        <begin position="209"/>
        <end position="244"/>
    </location>
</feature>
<feature type="region of interest" description="Disordered" evidence="2">
    <location>
        <begin position="363"/>
        <end position="400"/>
    </location>
</feature>
<feature type="compositionally biased region" description="Basic and acidic residues" evidence="2">
    <location>
        <begin position="370"/>
        <end position="387"/>
    </location>
</feature>
<feature type="compositionally biased region" description="Low complexity" evidence="2">
    <location>
        <begin position="388"/>
        <end position="400"/>
    </location>
</feature>
<comment type="function">
    <text evidence="1">The UvrABC repair system catalyzes the recognition and processing of DNA lesions. UvrC both incises the 5' and 3' sides of the lesion. The N-terminal half is responsible for the 3' incision and the C-terminal half is responsible for the 5' incision.</text>
</comment>
<comment type="subunit">
    <text evidence="1">Interacts with UvrB in an incision complex.</text>
</comment>
<comment type="subcellular location">
    <subcellularLocation>
        <location evidence="1">Cytoplasm</location>
    </subcellularLocation>
</comment>
<comment type="similarity">
    <text evidence="1">Belongs to the UvrC family.</text>
</comment>
<gene>
    <name evidence="1" type="primary">uvrC</name>
    <name type="ordered locus">BMA10229_A2824</name>
</gene>
<name>UVRC_BURM9</name>
<dbReference type="EMBL" id="CP000546">
    <property type="protein sequence ID" value="ABN01813.1"/>
    <property type="molecule type" value="Genomic_DNA"/>
</dbReference>
<dbReference type="RefSeq" id="WP_004192853.1">
    <property type="nucleotide sequence ID" value="NC_008836.1"/>
</dbReference>
<dbReference type="SMR" id="A2SA04"/>
<dbReference type="GeneID" id="92978320"/>
<dbReference type="KEGG" id="bml:BMA10229_A2824"/>
<dbReference type="HOGENOM" id="CLU_014841_3_0_4"/>
<dbReference type="Proteomes" id="UP000002283">
    <property type="component" value="Chromosome I"/>
</dbReference>
<dbReference type="GO" id="GO:0005737">
    <property type="term" value="C:cytoplasm"/>
    <property type="evidence" value="ECO:0007669"/>
    <property type="project" value="UniProtKB-SubCell"/>
</dbReference>
<dbReference type="GO" id="GO:0009380">
    <property type="term" value="C:excinuclease repair complex"/>
    <property type="evidence" value="ECO:0007669"/>
    <property type="project" value="InterPro"/>
</dbReference>
<dbReference type="GO" id="GO:0003677">
    <property type="term" value="F:DNA binding"/>
    <property type="evidence" value="ECO:0007669"/>
    <property type="project" value="UniProtKB-UniRule"/>
</dbReference>
<dbReference type="GO" id="GO:0009381">
    <property type="term" value="F:excinuclease ABC activity"/>
    <property type="evidence" value="ECO:0007669"/>
    <property type="project" value="UniProtKB-UniRule"/>
</dbReference>
<dbReference type="GO" id="GO:0006289">
    <property type="term" value="P:nucleotide-excision repair"/>
    <property type="evidence" value="ECO:0007669"/>
    <property type="project" value="UniProtKB-UniRule"/>
</dbReference>
<dbReference type="GO" id="GO:0009432">
    <property type="term" value="P:SOS response"/>
    <property type="evidence" value="ECO:0007669"/>
    <property type="project" value="UniProtKB-UniRule"/>
</dbReference>
<dbReference type="CDD" id="cd10434">
    <property type="entry name" value="GIY-YIG_UvrC_Cho"/>
    <property type="match status" value="1"/>
</dbReference>
<dbReference type="FunFam" id="3.30.420.340:FF:000001">
    <property type="entry name" value="UvrABC system protein C"/>
    <property type="match status" value="1"/>
</dbReference>
<dbReference type="FunFam" id="3.40.1440.10:FF:000001">
    <property type="entry name" value="UvrABC system protein C"/>
    <property type="match status" value="1"/>
</dbReference>
<dbReference type="Gene3D" id="1.10.150.20">
    <property type="entry name" value="5' to 3' exonuclease, C-terminal subdomain"/>
    <property type="match status" value="1"/>
</dbReference>
<dbReference type="Gene3D" id="3.40.1440.10">
    <property type="entry name" value="GIY-YIG endonuclease"/>
    <property type="match status" value="1"/>
</dbReference>
<dbReference type="Gene3D" id="4.10.860.10">
    <property type="entry name" value="UVR domain"/>
    <property type="match status" value="1"/>
</dbReference>
<dbReference type="Gene3D" id="3.30.420.340">
    <property type="entry name" value="UvrC, RNAse H endonuclease domain"/>
    <property type="match status" value="1"/>
</dbReference>
<dbReference type="HAMAP" id="MF_00203">
    <property type="entry name" value="UvrC"/>
    <property type="match status" value="1"/>
</dbReference>
<dbReference type="InterPro" id="IPR000305">
    <property type="entry name" value="GIY-YIG_endonuc"/>
</dbReference>
<dbReference type="InterPro" id="IPR035901">
    <property type="entry name" value="GIY-YIG_endonuc_sf"/>
</dbReference>
<dbReference type="InterPro" id="IPR047296">
    <property type="entry name" value="GIY-YIG_UvrC_Cho"/>
</dbReference>
<dbReference type="InterPro" id="IPR003583">
    <property type="entry name" value="Hlx-hairpin-Hlx_DNA-bd_motif"/>
</dbReference>
<dbReference type="InterPro" id="IPR010994">
    <property type="entry name" value="RuvA_2-like"/>
</dbReference>
<dbReference type="InterPro" id="IPR001943">
    <property type="entry name" value="UVR_dom"/>
</dbReference>
<dbReference type="InterPro" id="IPR036876">
    <property type="entry name" value="UVR_dom_sf"/>
</dbReference>
<dbReference type="InterPro" id="IPR050066">
    <property type="entry name" value="UvrABC_protein_C"/>
</dbReference>
<dbReference type="InterPro" id="IPR004791">
    <property type="entry name" value="UvrC"/>
</dbReference>
<dbReference type="InterPro" id="IPR001162">
    <property type="entry name" value="UvrC_RNase_H_dom"/>
</dbReference>
<dbReference type="InterPro" id="IPR038476">
    <property type="entry name" value="UvrC_RNase_H_dom_sf"/>
</dbReference>
<dbReference type="NCBIfam" id="NF001824">
    <property type="entry name" value="PRK00558.1-5"/>
    <property type="match status" value="1"/>
</dbReference>
<dbReference type="NCBIfam" id="TIGR00194">
    <property type="entry name" value="uvrC"/>
    <property type="match status" value="1"/>
</dbReference>
<dbReference type="PANTHER" id="PTHR30562:SF1">
    <property type="entry name" value="UVRABC SYSTEM PROTEIN C"/>
    <property type="match status" value="1"/>
</dbReference>
<dbReference type="PANTHER" id="PTHR30562">
    <property type="entry name" value="UVRC/OXIDOREDUCTASE"/>
    <property type="match status" value="1"/>
</dbReference>
<dbReference type="Pfam" id="PF01541">
    <property type="entry name" value="GIY-YIG"/>
    <property type="match status" value="1"/>
</dbReference>
<dbReference type="Pfam" id="PF14520">
    <property type="entry name" value="HHH_5"/>
    <property type="match status" value="1"/>
</dbReference>
<dbReference type="Pfam" id="PF02151">
    <property type="entry name" value="UVR"/>
    <property type="match status" value="1"/>
</dbReference>
<dbReference type="Pfam" id="PF22920">
    <property type="entry name" value="UvrC_RNaseH"/>
    <property type="match status" value="2"/>
</dbReference>
<dbReference type="Pfam" id="PF08459">
    <property type="entry name" value="UvrC_RNaseH_dom"/>
    <property type="match status" value="1"/>
</dbReference>
<dbReference type="SMART" id="SM00465">
    <property type="entry name" value="GIYc"/>
    <property type="match status" value="1"/>
</dbReference>
<dbReference type="SMART" id="SM00278">
    <property type="entry name" value="HhH1"/>
    <property type="match status" value="2"/>
</dbReference>
<dbReference type="SUPFAM" id="SSF46600">
    <property type="entry name" value="C-terminal UvrC-binding domain of UvrB"/>
    <property type="match status" value="1"/>
</dbReference>
<dbReference type="SUPFAM" id="SSF82771">
    <property type="entry name" value="GIY-YIG endonuclease"/>
    <property type="match status" value="1"/>
</dbReference>
<dbReference type="SUPFAM" id="SSF47781">
    <property type="entry name" value="RuvA domain 2-like"/>
    <property type="match status" value="1"/>
</dbReference>
<dbReference type="PROSITE" id="PS50164">
    <property type="entry name" value="GIY_YIG"/>
    <property type="match status" value="1"/>
</dbReference>
<dbReference type="PROSITE" id="PS50151">
    <property type="entry name" value="UVR"/>
    <property type="match status" value="1"/>
</dbReference>
<dbReference type="PROSITE" id="PS50165">
    <property type="entry name" value="UVRC"/>
    <property type="match status" value="1"/>
</dbReference>
<organism>
    <name type="scientific">Burkholderia mallei (strain NCTC 10229)</name>
    <dbReference type="NCBI Taxonomy" id="412022"/>
    <lineage>
        <taxon>Bacteria</taxon>
        <taxon>Pseudomonadati</taxon>
        <taxon>Pseudomonadota</taxon>
        <taxon>Betaproteobacteria</taxon>
        <taxon>Burkholderiales</taxon>
        <taxon>Burkholderiaceae</taxon>
        <taxon>Burkholderia</taxon>
        <taxon>pseudomallei group</taxon>
    </lineage>
</organism>
<keyword id="KW-0963">Cytoplasm</keyword>
<keyword id="KW-0227">DNA damage</keyword>
<keyword id="KW-0228">DNA excision</keyword>
<keyword id="KW-0234">DNA repair</keyword>
<keyword id="KW-0267">Excision nuclease</keyword>
<keyword id="KW-0742">SOS response</keyword>